<gene>
    <name evidence="1" type="primary">argD</name>
    <name type="ordered locus">BH2897</name>
</gene>
<dbReference type="EC" id="2.6.1.11" evidence="1"/>
<dbReference type="EMBL" id="BA000004">
    <property type="protein sequence ID" value="BAB06616.1"/>
    <property type="molecule type" value="Genomic_DNA"/>
</dbReference>
<dbReference type="PIR" id="A84012">
    <property type="entry name" value="A84012"/>
</dbReference>
<dbReference type="RefSeq" id="WP_010899044.1">
    <property type="nucleotide sequence ID" value="NC_002570.2"/>
</dbReference>
<dbReference type="SMR" id="Q9K8V5"/>
<dbReference type="STRING" id="272558.gene:10728807"/>
<dbReference type="KEGG" id="bha:BH2897"/>
<dbReference type="eggNOG" id="COG4992">
    <property type="taxonomic scope" value="Bacteria"/>
</dbReference>
<dbReference type="HOGENOM" id="CLU_016922_10_1_9"/>
<dbReference type="OrthoDB" id="9807885at2"/>
<dbReference type="UniPathway" id="UPA00068">
    <property type="reaction ID" value="UER00109"/>
</dbReference>
<dbReference type="Proteomes" id="UP000001258">
    <property type="component" value="Chromosome"/>
</dbReference>
<dbReference type="GO" id="GO:0005737">
    <property type="term" value="C:cytoplasm"/>
    <property type="evidence" value="ECO:0007669"/>
    <property type="project" value="UniProtKB-SubCell"/>
</dbReference>
<dbReference type="GO" id="GO:0042802">
    <property type="term" value="F:identical protein binding"/>
    <property type="evidence" value="ECO:0007669"/>
    <property type="project" value="TreeGrafter"/>
</dbReference>
<dbReference type="GO" id="GO:0003992">
    <property type="term" value="F:N2-acetyl-L-ornithine:2-oxoglutarate 5-aminotransferase activity"/>
    <property type="evidence" value="ECO:0007669"/>
    <property type="project" value="UniProtKB-UniRule"/>
</dbReference>
<dbReference type="GO" id="GO:0030170">
    <property type="term" value="F:pyridoxal phosphate binding"/>
    <property type="evidence" value="ECO:0007669"/>
    <property type="project" value="InterPro"/>
</dbReference>
<dbReference type="GO" id="GO:0006526">
    <property type="term" value="P:L-arginine biosynthetic process"/>
    <property type="evidence" value="ECO:0007669"/>
    <property type="project" value="UniProtKB-UniRule"/>
</dbReference>
<dbReference type="CDD" id="cd00610">
    <property type="entry name" value="OAT_like"/>
    <property type="match status" value="1"/>
</dbReference>
<dbReference type="FunFam" id="3.40.640.10:FF:000004">
    <property type="entry name" value="Acetylornithine aminotransferase"/>
    <property type="match status" value="1"/>
</dbReference>
<dbReference type="Gene3D" id="3.90.1150.10">
    <property type="entry name" value="Aspartate Aminotransferase, domain 1"/>
    <property type="match status" value="1"/>
</dbReference>
<dbReference type="Gene3D" id="3.40.640.10">
    <property type="entry name" value="Type I PLP-dependent aspartate aminotransferase-like (Major domain)"/>
    <property type="match status" value="1"/>
</dbReference>
<dbReference type="HAMAP" id="MF_01107">
    <property type="entry name" value="ArgD_aminotrans_3"/>
    <property type="match status" value="1"/>
</dbReference>
<dbReference type="InterPro" id="IPR004636">
    <property type="entry name" value="AcOrn/SuccOrn_fam"/>
</dbReference>
<dbReference type="InterPro" id="IPR005814">
    <property type="entry name" value="Aminotrans_3"/>
</dbReference>
<dbReference type="InterPro" id="IPR049704">
    <property type="entry name" value="Aminotrans_3_PPA_site"/>
</dbReference>
<dbReference type="InterPro" id="IPR050103">
    <property type="entry name" value="Class-III_PLP-dep_AT"/>
</dbReference>
<dbReference type="InterPro" id="IPR015424">
    <property type="entry name" value="PyrdxlP-dep_Trfase"/>
</dbReference>
<dbReference type="InterPro" id="IPR015421">
    <property type="entry name" value="PyrdxlP-dep_Trfase_major"/>
</dbReference>
<dbReference type="InterPro" id="IPR015422">
    <property type="entry name" value="PyrdxlP-dep_Trfase_small"/>
</dbReference>
<dbReference type="NCBIfam" id="TIGR00707">
    <property type="entry name" value="argD"/>
    <property type="match status" value="1"/>
</dbReference>
<dbReference type="NCBIfam" id="NF002325">
    <property type="entry name" value="PRK01278.1"/>
    <property type="match status" value="1"/>
</dbReference>
<dbReference type="NCBIfam" id="NF002797">
    <property type="entry name" value="PRK02936.1"/>
    <property type="match status" value="1"/>
</dbReference>
<dbReference type="PANTHER" id="PTHR11986:SF79">
    <property type="entry name" value="ACETYLORNITHINE AMINOTRANSFERASE, MITOCHONDRIAL"/>
    <property type="match status" value="1"/>
</dbReference>
<dbReference type="PANTHER" id="PTHR11986">
    <property type="entry name" value="AMINOTRANSFERASE CLASS III"/>
    <property type="match status" value="1"/>
</dbReference>
<dbReference type="Pfam" id="PF00202">
    <property type="entry name" value="Aminotran_3"/>
    <property type="match status" value="1"/>
</dbReference>
<dbReference type="PIRSF" id="PIRSF000521">
    <property type="entry name" value="Transaminase_4ab_Lys_Orn"/>
    <property type="match status" value="1"/>
</dbReference>
<dbReference type="SUPFAM" id="SSF53383">
    <property type="entry name" value="PLP-dependent transferases"/>
    <property type="match status" value="1"/>
</dbReference>
<dbReference type="PROSITE" id="PS00600">
    <property type="entry name" value="AA_TRANSFER_CLASS_3"/>
    <property type="match status" value="1"/>
</dbReference>
<protein>
    <recommendedName>
        <fullName evidence="1">Acetylornithine aminotransferase</fullName>
        <shortName evidence="1">ACOAT</shortName>
        <ecNumber evidence="1">2.6.1.11</ecNumber>
    </recommendedName>
</protein>
<accession>Q9K8V5</accession>
<feature type="chain" id="PRO_0000112719" description="Acetylornithine aminotransferase">
    <location>
        <begin position="1"/>
        <end position="384"/>
    </location>
</feature>
<feature type="binding site" evidence="1">
    <location>
        <begin position="95"/>
        <end position="96"/>
    </location>
    <ligand>
        <name>pyridoxal 5'-phosphate</name>
        <dbReference type="ChEBI" id="CHEBI:597326"/>
    </ligand>
</feature>
<feature type="binding site" evidence="1">
    <location>
        <position position="122"/>
    </location>
    <ligand>
        <name>pyridoxal 5'-phosphate</name>
        <dbReference type="ChEBI" id="CHEBI:597326"/>
    </ligand>
</feature>
<feature type="binding site" evidence="1">
    <location>
        <position position="125"/>
    </location>
    <ligand>
        <name>N(2)-acetyl-L-ornithine</name>
        <dbReference type="ChEBI" id="CHEBI:57805"/>
    </ligand>
</feature>
<feature type="binding site" evidence="1">
    <location>
        <begin position="207"/>
        <end position="210"/>
    </location>
    <ligand>
        <name>pyridoxal 5'-phosphate</name>
        <dbReference type="ChEBI" id="CHEBI:597326"/>
    </ligand>
</feature>
<feature type="binding site" evidence="1">
    <location>
        <position position="264"/>
    </location>
    <ligand>
        <name>N(2)-acetyl-L-ornithine</name>
        <dbReference type="ChEBI" id="CHEBI:57805"/>
    </ligand>
</feature>
<feature type="binding site" evidence="1">
    <location>
        <position position="265"/>
    </location>
    <ligand>
        <name>pyridoxal 5'-phosphate</name>
        <dbReference type="ChEBI" id="CHEBI:597326"/>
    </ligand>
</feature>
<feature type="modified residue" description="N6-(pyridoxal phosphate)lysine" evidence="1">
    <location>
        <position position="236"/>
    </location>
</feature>
<organism>
    <name type="scientific">Halalkalibacterium halodurans (strain ATCC BAA-125 / DSM 18197 / FERM 7344 / JCM 9153 / C-125)</name>
    <name type="common">Bacillus halodurans</name>
    <dbReference type="NCBI Taxonomy" id="272558"/>
    <lineage>
        <taxon>Bacteria</taxon>
        <taxon>Bacillati</taxon>
        <taxon>Bacillota</taxon>
        <taxon>Bacilli</taxon>
        <taxon>Bacillales</taxon>
        <taxon>Bacillaceae</taxon>
        <taxon>Halalkalibacterium (ex Joshi et al. 2022)</taxon>
    </lineage>
</organism>
<name>ARGD_HALH5</name>
<evidence type="ECO:0000255" key="1">
    <source>
        <dbReference type="HAMAP-Rule" id="MF_01107"/>
    </source>
</evidence>
<keyword id="KW-0028">Amino-acid biosynthesis</keyword>
<keyword id="KW-0032">Aminotransferase</keyword>
<keyword id="KW-0055">Arginine biosynthesis</keyword>
<keyword id="KW-0963">Cytoplasm</keyword>
<keyword id="KW-0663">Pyridoxal phosphate</keyword>
<keyword id="KW-1185">Reference proteome</keyword>
<keyword id="KW-0808">Transferase</keyword>
<sequence>MSHLFPTYAKWDVTITSGKGTKLYDNQGNEYLDFVSGIAVCNLGHCHPKVVAAVEEQLHSFWHVSNLFHIPIQENVAALLTEQSGMDAVFFCNSGAEANEAAIKLARKATGKHEIVTFTQSFHGRTLGTMSATGQDKIKTGFGPMLETFHHVPFNDIAALKQVVNEQTAAIVLEVIQGEGGVNLIDPEFAASVNHVCQEHGILLIIDEIQTGIGRTGTAFAFQQYELTPDIITVAKGLGNGFPVGAMLGKQHLIDAFSAGSHGSTFGGNPLAMAAAQAVLTEVFQPNFLQAVQEKGKQLLSGLNEALSGLEIVKEIRGNGLLVGIELQEEGAPFIKQLREKGLLVLNAGPNVIRLLPPLVVTSEELHEAVTQLKEVLDQASVHA</sequence>
<comment type="catalytic activity">
    <reaction evidence="1">
        <text>N(2)-acetyl-L-ornithine + 2-oxoglutarate = N-acetyl-L-glutamate 5-semialdehyde + L-glutamate</text>
        <dbReference type="Rhea" id="RHEA:18049"/>
        <dbReference type="ChEBI" id="CHEBI:16810"/>
        <dbReference type="ChEBI" id="CHEBI:29123"/>
        <dbReference type="ChEBI" id="CHEBI:29985"/>
        <dbReference type="ChEBI" id="CHEBI:57805"/>
        <dbReference type="EC" id="2.6.1.11"/>
    </reaction>
</comment>
<comment type="cofactor">
    <cofactor evidence="1">
        <name>pyridoxal 5'-phosphate</name>
        <dbReference type="ChEBI" id="CHEBI:597326"/>
    </cofactor>
    <text evidence="1">Binds 1 pyridoxal phosphate per subunit.</text>
</comment>
<comment type="pathway">
    <text evidence="1">Amino-acid biosynthesis; L-arginine biosynthesis; N(2)-acetyl-L-ornithine from L-glutamate: step 4/4.</text>
</comment>
<comment type="subunit">
    <text evidence="1">Homodimer.</text>
</comment>
<comment type="subcellular location">
    <subcellularLocation>
        <location evidence="1">Cytoplasm</location>
    </subcellularLocation>
</comment>
<comment type="miscellaneous">
    <text evidence="1">May also have succinyldiaminopimelate aminotransferase activity, thus carrying out the corresponding step in lysine biosynthesis.</text>
</comment>
<comment type="similarity">
    <text evidence="1">Belongs to the class-III pyridoxal-phosphate-dependent aminotransferase family. ArgD subfamily.</text>
</comment>
<reference key="1">
    <citation type="journal article" date="2000" name="Nucleic Acids Res.">
        <title>Complete genome sequence of the alkaliphilic bacterium Bacillus halodurans and genomic sequence comparison with Bacillus subtilis.</title>
        <authorList>
            <person name="Takami H."/>
            <person name="Nakasone K."/>
            <person name="Takaki Y."/>
            <person name="Maeno G."/>
            <person name="Sasaki R."/>
            <person name="Masui N."/>
            <person name="Fuji F."/>
            <person name="Hirama C."/>
            <person name="Nakamura Y."/>
            <person name="Ogasawara N."/>
            <person name="Kuhara S."/>
            <person name="Horikoshi K."/>
        </authorList>
    </citation>
    <scope>NUCLEOTIDE SEQUENCE [LARGE SCALE GENOMIC DNA]</scope>
    <source>
        <strain>ATCC BAA-125 / DSM 18197 / FERM 7344 / JCM 9153 / C-125</strain>
    </source>
</reference>
<proteinExistence type="inferred from homology"/>